<name>NADD_ROSCS</name>
<gene>
    <name evidence="1" type="primary">nadD</name>
    <name type="ordered locus">Rcas_3366</name>
</gene>
<accession>A7NPC0</accession>
<dbReference type="EC" id="2.7.7.18" evidence="1"/>
<dbReference type="EMBL" id="CP000804">
    <property type="protein sequence ID" value="ABU59416.1"/>
    <property type="molecule type" value="Genomic_DNA"/>
</dbReference>
<dbReference type="RefSeq" id="WP_012121840.1">
    <property type="nucleotide sequence ID" value="NC_009767.1"/>
</dbReference>
<dbReference type="SMR" id="A7NPC0"/>
<dbReference type="STRING" id="383372.Rcas_3366"/>
<dbReference type="KEGG" id="rca:Rcas_3366"/>
<dbReference type="eggNOG" id="COG1057">
    <property type="taxonomic scope" value="Bacteria"/>
</dbReference>
<dbReference type="HOGENOM" id="CLU_069765_1_1_0"/>
<dbReference type="OrthoDB" id="5295945at2"/>
<dbReference type="UniPathway" id="UPA00253">
    <property type="reaction ID" value="UER00332"/>
</dbReference>
<dbReference type="Proteomes" id="UP000000263">
    <property type="component" value="Chromosome"/>
</dbReference>
<dbReference type="GO" id="GO:0005524">
    <property type="term" value="F:ATP binding"/>
    <property type="evidence" value="ECO:0007669"/>
    <property type="project" value="UniProtKB-KW"/>
</dbReference>
<dbReference type="GO" id="GO:0004515">
    <property type="term" value="F:nicotinate-nucleotide adenylyltransferase activity"/>
    <property type="evidence" value="ECO:0007669"/>
    <property type="project" value="UniProtKB-UniRule"/>
</dbReference>
<dbReference type="GO" id="GO:0009435">
    <property type="term" value="P:NAD biosynthetic process"/>
    <property type="evidence" value="ECO:0007669"/>
    <property type="project" value="UniProtKB-UniRule"/>
</dbReference>
<dbReference type="CDD" id="cd02165">
    <property type="entry name" value="NMNAT"/>
    <property type="match status" value="1"/>
</dbReference>
<dbReference type="Gene3D" id="3.40.50.620">
    <property type="entry name" value="HUPs"/>
    <property type="match status" value="1"/>
</dbReference>
<dbReference type="HAMAP" id="MF_00244">
    <property type="entry name" value="NaMN_adenylyltr"/>
    <property type="match status" value="1"/>
</dbReference>
<dbReference type="InterPro" id="IPR004821">
    <property type="entry name" value="Cyt_trans-like"/>
</dbReference>
<dbReference type="InterPro" id="IPR005248">
    <property type="entry name" value="NadD/NMNAT"/>
</dbReference>
<dbReference type="InterPro" id="IPR014729">
    <property type="entry name" value="Rossmann-like_a/b/a_fold"/>
</dbReference>
<dbReference type="NCBIfam" id="TIGR00125">
    <property type="entry name" value="cyt_tran_rel"/>
    <property type="match status" value="1"/>
</dbReference>
<dbReference type="NCBIfam" id="TIGR00482">
    <property type="entry name" value="nicotinate (nicotinamide) nucleotide adenylyltransferase"/>
    <property type="match status" value="1"/>
</dbReference>
<dbReference type="NCBIfam" id="NF000840">
    <property type="entry name" value="PRK00071.1-3"/>
    <property type="match status" value="1"/>
</dbReference>
<dbReference type="PANTHER" id="PTHR39321">
    <property type="entry name" value="NICOTINATE-NUCLEOTIDE ADENYLYLTRANSFERASE-RELATED"/>
    <property type="match status" value="1"/>
</dbReference>
<dbReference type="PANTHER" id="PTHR39321:SF3">
    <property type="entry name" value="PHOSPHOPANTETHEINE ADENYLYLTRANSFERASE"/>
    <property type="match status" value="1"/>
</dbReference>
<dbReference type="Pfam" id="PF01467">
    <property type="entry name" value="CTP_transf_like"/>
    <property type="match status" value="1"/>
</dbReference>
<dbReference type="SUPFAM" id="SSF52374">
    <property type="entry name" value="Nucleotidylyl transferase"/>
    <property type="match status" value="1"/>
</dbReference>
<sequence>MTSGRTGILGGSFDPIHYGHLAIAEEVRVLLRLNRVLIIPAREQPLKPGGSVASPAHRLAMARLACADNPFFEVSRIEIDRPDPSYTSVTLQLLHEQGLNDLYLILGIDSVADLPRWREVRRILELAHIVGVARPGAAVDLSHLSQVLPQLPARLIEIDGPRLDISSTDLRQRVAQGRPIRYQTPDAVVAYIEANGLYR</sequence>
<reference key="1">
    <citation type="submission" date="2007-08" db="EMBL/GenBank/DDBJ databases">
        <title>Complete sequence of Roseiflexus castenholzii DSM 13941.</title>
        <authorList>
            <consortium name="US DOE Joint Genome Institute"/>
            <person name="Copeland A."/>
            <person name="Lucas S."/>
            <person name="Lapidus A."/>
            <person name="Barry K."/>
            <person name="Glavina del Rio T."/>
            <person name="Dalin E."/>
            <person name="Tice H."/>
            <person name="Pitluck S."/>
            <person name="Thompson L.S."/>
            <person name="Brettin T."/>
            <person name="Bruce D."/>
            <person name="Detter J.C."/>
            <person name="Han C."/>
            <person name="Tapia R."/>
            <person name="Schmutz J."/>
            <person name="Larimer F."/>
            <person name="Land M."/>
            <person name="Hauser L."/>
            <person name="Kyrpides N."/>
            <person name="Mikhailova N."/>
            <person name="Bryant D.A."/>
            <person name="Hanada S."/>
            <person name="Tsukatani Y."/>
            <person name="Richardson P."/>
        </authorList>
    </citation>
    <scope>NUCLEOTIDE SEQUENCE [LARGE SCALE GENOMIC DNA]</scope>
    <source>
        <strain>DSM 13941 / HLO8</strain>
    </source>
</reference>
<evidence type="ECO:0000255" key="1">
    <source>
        <dbReference type="HAMAP-Rule" id="MF_00244"/>
    </source>
</evidence>
<proteinExistence type="inferred from homology"/>
<keyword id="KW-0067">ATP-binding</keyword>
<keyword id="KW-0520">NAD</keyword>
<keyword id="KW-0547">Nucleotide-binding</keyword>
<keyword id="KW-0548">Nucleotidyltransferase</keyword>
<keyword id="KW-0662">Pyridine nucleotide biosynthesis</keyword>
<keyword id="KW-1185">Reference proteome</keyword>
<keyword id="KW-0808">Transferase</keyword>
<feature type="chain" id="PRO_0000336729" description="Probable nicotinate-nucleotide adenylyltransferase">
    <location>
        <begin position="1"/>
        <end position="199"/>
    </location>
</feature>
<protein>
    <recommendedName>
        <fullName evidence="1">Probable nicotinate-nucleotide adenylyltransferase</fullName>
        <ecNumber evidence="1">2.7.7.18</ecNumber>
    </recommendedName>
    <alternativeName>
        <fullName evidence="1">Deamido-NAD(+) diphosphorylase</fullName>
    </alternativeName>
    <alternativeName>
        <fullName evidence="1">Deamido-NAD(+) pyrophosphorylase</fullName>
    </alternativeName>
    <alternativeName>
        <fullName evidence="1">Nicotinate mononucleotide adenylyltransferase</fullName>
        <shortName evidence="1">NaMN adenylyltransferase</shortName>
    </alternativeName>
</protein>
<organism>
    <name type="scientific">Roseiflexus castenholzii (strain DSM 13941 / HLO8)</name>
    <dbReference type="NCBI Taxonomy" id="383372"/>
    <lineage>
        <taxon>Bacteria</taxon>
        <taxon>Bacillati</taxon>
        <taxon>Chloroflexota</taxon>
        <taxon>Chloroflexia</taxon>
        <taxon>Chloroflexales</taxon>
        <taxon>Roseiflexineae</taxon>
        <taxon>Roseiflexaceae</taxon>
        <taxon>Roseiflexus</taxon>
    </lineage>
</organism>
<comment type="function">
    <text evidence="1">Catalyzes the reversible adenylation of nicotinate mononucleotide (NaMN) to nicotinic acid adenine dinucleotide (NaAD).</text>
</comment>
<comment type="catalytic activity">
    <reaction evidence="1">
        <text>nicotinate beta-D-ribonucleotide + ATP + H(+) = deamido-NAD(+) + diphosphate</text>
        <dbReference type="Rhea" id="RHEA:22860"/>
        <dbReference type="ChEBI" id="CHEBI:15378"/>
        <dbReference type="ChEBI" id="CHEBI:30616"/>
        <dbReference type="ChEBI" id="CHEBI:33019"/>
        <dbReference type="ChEBI" id="CHEBI:57502"/>
        <dbReference type="ChEBI" id="CHEBI:58437"/>
        <dbReference type="EC" id="2.7.7.18"/>
    </reaction>
</comment>
<comment type="pathway">
    <text evidence="1">Cofactor biosynthesis; NAD(+) biosynthesis; deamido-NAD(+) from nicotinate D-ribonucleotide: step 1/1.</text>
</comment>
<comment type="similarity">
    <text evidence="1">Belongs to the NadD family.</text>
</comment>